<evidence type="ECO:0000250" key="1"/>
<evidence type="ECO:0000255" key="2">
    <source>
        <dbReference type="HAMAP-Rule" id="MF_00118"/>
    </source>
</evidence>
<evidence type="ECO:0000305" key="3"/>
<keyword id="KW-0150">Chloroplast</keyword>
<keyword id="KW-0251">Elongation factor</keyword>
<keyword id="KW-0342">GTP-binding</keyword>
<keyword id="KW-0378">Hydrolase</keyword>
<keyword id="KW-0460">Magnesium</keyword>
<keyword id="KW-0479">Metal-binding</keyword>
<keyword id="KW-0547">Nucleotide-binding</keyword>
<keyword id="KW-0934">Plastid</keyword>
<keyword id="KW-0648">Protein biosynthesis</keyword>
<comment type="function">
    <text evidence="2">GTP hydrolase that promotes the GTP-dependent binding of aminoacyl-tRNA to the A-site of ribosomes during protein biosynthesis.</text>
</comment>
<comment type="catalytic activity">
    <reaction evidence="2">
        <text>GTP + H2O = GDP + phosphate + H(+)</text>
        <dbReference type="Rhea" id="RHEA:19669"/>
        <dbReference type="ChEBI" id="CHEBI:15377"/>
        <dbReference type="ChEBI" id="CHEBI:15378"/>
        <dbReference type="ChEBI" id="CHEBI:37565"/>
        <dbReference type="ChEBI" id="CHEBI:43474"/>
        <dbReference type="ChEBI" id="CHEBI:58189"/>
        <dbReference type="EC" id="3.6.5.3"/>
    </reaction>
    <physiologicalReaction direction="left-to-right" evidence="2">
        <dbReference type="Rhea" id="RHEA:19670"/>
    </physiologicalReaction>
</comment>
<comment type="subcellular location">
    <subcellularLocation>
        <location>Plastid</location>
        <location>Chloroplast</location>
    </subcellularLocation>
</comment>
<comment type="similarity">
    <text evidence="3">Belongs to the TRAFAC class translation factor GTPase superfamily. Classic translation factor GTPase family. EF-Tu/EF-1A subfamily.</text>
</comment>
<name>EFTU_PORPU</name>
<proteinExistence type="inferred from homology"/>
<protein>
    <recommendedName>
        <fullName>Elongation factor Tu, chloroplastic</fullName>
        <shortName>EF-Tu</shortName>
        <ecNumber evidence="2">3.6.5.3</ecNumber>
    </recommendedName>
</protein>
<feature type="chain" id="PRO_0000091469" description="Elongation factor Tu, chloroplastic">
    <location>
        <begin position="1"/>
        <end position="409"/>
    </location>
</feature>
<feature type="domain" description="tr-type G">
    <location>
        <begin position="10"/>
        <end position="214"/>
    </location>
</feature>
<feature type="region of interest" description="G1" evidence="1">
    <location>
        <begin position="19"/>
        <end position="26"/>
    </location>
</feature>
<feature type="region of interest" description="G2" evidence="1">
    <location>
        <begin position="60"/>
        <end position="64"/>
    </location>
</feature>
<feature type="region of interest" description="G3" evidence="1">
    <location>
        <begin position="81"/>
        <end position="84"/>
    </location>
</feature>
<feature type="region of interest" description="G4" evidence="1">
    <location>
        <begin position="136"/>
        <end position="139"/>
    </location>
</feature>
<feature type="region of interest" description="G5" evidence="1">
    <location>
        <begin position="174"/>
        <end position="176"/>
    </location>
</feature>
<feature type="binding site" evidence="1">
    <location>
        <begin position="19"/>
        <end position="26"/>
    </location>
    <ligand>
        <name>GTP</name>
        <dbReference type="ChEBI" id="CHEBI:37565"/>
    </ligand>
</feature>
<feature type="binding site" evidence="2">
    <location>
        <position position="26"/>
    </location>
    <ligand>
        <name>Mg(2+)</name>
        <dbReference type="ChEBI" id="CHEBI:18420"/>
    </ligand>
</feature>
<feature type="binding site" evidence="1">
    <location>
        <begin position="81"/>
        <end position="85"/>
    </location>
    <ligand>
        <name>GTP</name>
        <dbReference type="ChEBI" id="CHEBI:37565"/>
    </ligand>
</feature>
<feature type="binding site" evidence="1">
    <location>
        <begin position="136"/>
        <end position="139"/>
    </location>
    <ligand>
        <name>GTP</name>
        <dbReference type="ChEBI" id="CHEBI:37565"/>
    </ligand>
</feature>
<organism>
    <name type="scientific">Porphyra purpurea</name>
    <name type="common">Red seaweed</name>
    <name type="synonym">Ulva purpurea</name>
    <dbReference type="NCBI Taxonomy" id="2787"/>
    <lineage>
        <taxon>Eukaryota</taxon>
        <taxon>Rhodophyta</taxon>
        <taxon>Bangiophyceae</taxon>
        <taxon>Bangiales</taxon>
        <taxon>Bangiaceae</taxon>
        <taxon>Porphyra</taxon>
    </lineage>
</organism>
<dbReference type="EC" id="3.6.5.3" evidence="2"/>
<dbReference type="EMBL" id="U38804">
    <property type="protein sequence ID" value="AAC08173.1"/>
    <property type="molecule type" value="Genomic_DNA"/>
</dbReference>
<dbReference type="PIR" id="S73208">
    <property type="entry name" value="S73208"/>
</dbReference>
<dbReference type="RefSeq" id="NP_053897.1">
    <property type="nucleotide sequence ID" value="NC_000925.1"/>
</dbReference>
<dbReference type="SMR" id="P51287"/>
<dbReference type="GeneID" id="809916"/>
<dbReference type="GO" id="GO:0009507">
    <property type="term" value="C:chloroplast"/>
    <property type="evidence" value="ECO:0007669"/>
    <property type="project" value="UniProtKB-SubCell"/>
</dbReference>
<dbReference type="GO" id="GO:0005829">
    <property type="term" value="C:cytosol"/>
    <property type="evidence" value="ECO:0007669"/>
    <property type="project" value="TreeGrafter"/>
</dbReference>
<dbReference type="GO" id="GO:0005525">
    <property type="term" value="F:GTP binding"/>
    <property type="evidence" value="ECO:0007669"/>
    <property type="project" value="UniProtKB-UniRule"/>
</dbReference>
<dbReference type="GO" id="GO:0003924">
    <property type="term" value="F:GTPase activity"/>
    <property type="evidence" value="ECO:0007669"/>
    <property type="project" value="InterPro"/>
</dbReference>
<dbReference type="GO" id="GO:0003746">
    <property type="term" value="F:translation elongation factor activity"/>
    <property type="evidence" value="ECO:0007669"/>
    <property type="project" value="UniProtKB-UniRule"/>
</dbReference>
<dbReference type="CDD" id="cd01884">
    <property type="entry name" value="EF_Tu"/>
    <property type="match status" value="1"/>
</dbReference>
<dbReference type="CDD" id="cd03697">
    <property type="entry name" value="EFTU_II"/>
    <property type="match status" value="1"/>
</dbReference>
<dbReference type="CDD" id="cd03707">
    <property type="entry name" value="EFTU_III"/>
    <property type="match status" value="1"/>
</dbReference>
<dbReference type="FunFam" id="2.40.30.10:FF:000001">
    <property type="entry name" value="Elongation factor Tu"/>
    <property type="match status" value="1"/>
</dbReference>
<dbReference type="FunFam" id="2.40.30.10:FF:000046">
    <property type="entry name" value="Elongation factor Tu"/>
    <property type="match status" value="1"/>
</dbReference>
<dbReference type="FunFam" id="3.40.50.300:FF:000003">
    <property type="entry name" value="Elongation factor Tu"/>
    <property type="match status" value="1"/>
</dbReference>
<dbReference type="Gene3D" id="3.40.50.300">
    <property type="entry name" value="P-loop containing nucleotide triphosphate hydrolases"/>
    <property type="match status" value="1"/>
</dbReference>
<dbReference type="Gene3D" id="2.40.30.10">
    <property type="entry name" value="Translation factors"/>
    <property type="match status" value="2"/>
</dbReference>
<dbReference type="HAMAP" id="MF_00118_B">
    <property type="entry name" value="EF_Tu_B"/>
    <property type="match status" value="1"/>
</dbReference>
<dbReference type="InterPro" id="IPR041709">
    <property type="entry name" value="EF-Tu_GTP-bd"/>
</dbReference>
<dbReference type="InterPro" id="IPR050055">
    <property type="entry name" value="EF-Tu_GTPase"/>
</dbReference>
<dbReference type="InterPro" id="IPR004161">
    <property type="entry name" value="EFTu-like_2"/>
</dbReference>
<dbReference type="InterPro" id="IPR033720">
    <property type="entry name" value="EFTU_2"/>
</dbReference>
<dbReference type="InterPro" id="IPR031157">
    <property type="entry name" value="G_TR_CS"/>
</dbReference>
<dbReference type="InterPro" id="IPR027417">
    <property type="entry name" value="P-loop_NTPase"/>
</dbReference>
<dbReference type="InterPro" id="IPR005225">
    <property type="entry name" value="Small_GTP-bd"/>
</dbReference>
<dbReference type="InterPro" id="IPR000795">
    <property type="entry name" value="T_Tr_GTP-bd_dom"/>
</dbReference>
<dbReference type="InterPro" id="IPR009000">
    <property type="entry name" value="Transl_B-barrel_sf"/>
</dbReference>
<dbReference type="InterPro" id="IPR009001">
    <property type="entry name" value="Transl_elong_EF1A/Init_IF2_C"/>
</dbReference>
<dbReference type="InterPro" id="IPR004541">
    <property type="entry name" value="Transl_elong_EFTu/EF1A_bac/org"/>
</dbReference>
<dbReference type="InterPro" id="IPR004160">
    <property type="entry name" value="Transl_elong_EFTu/EF1A_C"/>
</dbReference>
<dbReference type="NCBIfam" id="TIGR00485">
    <property type="entry name" value="EF-Tu"/>
    <property type="match status" value="1"/>
</dbReference>
<dbReference type="NCBIfam" id="NF000766">
    <property type="entry name" value="PRK00049.1"/>
    <property type="match status" value="1"/>
</dbReference>
<dbReference type="NCBIfam" id="NF009372">
    <property type="entry name" value="PRK12735.1"/>
    <property type="match status" value="1"/>
</dbReference>
<dbReference type="NCBIfam" id="NF009373">
    <property type="entry name" value="PRK12736.1"/>
    <property type="match status" value="1"/>
</dbReference>
<dbReference type="NCBIfam" id="TIGR00231">
    <property type="entry name" value="small_GTP"/>
    <property type="match status" value="1"/>
</dbReference>
<dbReference type="PANTHER" id="PTHR43721:SF22">
    <property type="entry name" value="ELONGATION FACTOR TU, MITOCHONDRIAL"/>
    <property type="match status" value="1"/>
</dbReference>
<dbReference type="PANTHER" id="PTHR43721">
    <property type="entry name" value="ELONGATION FACTOR TU-RELATED"/>
    <property type="match status" value="1"/>
</dbReference>
<dbReference type="Pfam" id="PF00009">
    <property type="entry name" value="GTP_EFTU"/>
    <property type="match status" value="1"/>
</dbReference>
<dbReference type="Pfam" id="PF03144">
    <property type="entry name" value="GTP_EFTU_D2"/>
    <property type="match status" value="1"/>
</dbReference>
<dbReference type="Pfam" id="PF03143">
    <property type="entry name" value="GTP_EFTU_D3"/>
    <property type="match status" value="1"/>
</dbReference>
<dbReference type="PRINTS" id="PR00315">
    <property type="entry name" value="ELONGATNFCT"/>
</dbReference>
<dbReference type="SUPFAM" id="SSF50465">
    <property type="entry name" value="EF-Tu/eEF-1alpha/eIF2-gamma C-terminal domain"/>
    <property type="match status" value="1"/>
</dbReference>
<dbReference type="SUPFAM" id="SSF52540">
    <property type="entry name" value="P-loop containing nucleoside triphosphate hydrolases"/>
    <property type="match status" value="1"/>
</dbReference>
<dbReference type="SUPFAM" id="SSF50447">
    <property type="entry name" value="Translation proteins"/>
    <property type="match status" value="1"/>
</dbReference>
<dbReference type="PROSITE" id="PS00301">
    <property type="entry name" value="G_TR_1"/>
    <property type="match status" value="1"/>
</dbReference>
<dbReference type="PROSITE" id="PS51722">
    <property type="entry name" value="G_TR_2"/>
    <property type="match status" value="1"/>
</dbReference>
<sequence length="409" mass="44687">MARSKFERKKPHVNIGTIGHVDHGKTTLTAAISATLSTLGSTAAKKFDEIDAAPEEKARGITINTAHVEYETDNRHYAHVDCPGHADYVKNMITGAAQMDGAILVVSAADGPMPQTREHILLAKQVGVPTLVVFLNKEDQVDDEELLELVELEGRELLSQYDFPGDDIPFVAGSALLALEAVTKNTSIKKGEDKWVDKIFSLMEAVDTYIPTPERDVDKTFLMAVEDVFSITGRGTVATGRIERGIIKVGDTIEIVGLRETRTTTITGLEMFQKTLEEGLAGDNIGILLRGVQKKDIERGMVLAKPGTITPHTQFEAEVYILTKEEGGRHTPFFPGYRPQFYVRTTDVTGTINQFTADDGTDAEMVMPGDRIKMTAELINAIAIEQGMRFAIREGGRTVGAGVVSKILK</sequence>
<geneLocation type="chloroplast"/>
<gene>
    <name type="primary">tufA</name>
</gene>
<reference key="1">
    <citation type="journal article" date="1995" name="Plant Mol. Biol. Rep.">
        <title>Complete nucleotide sequence of the Porphyra purpurea chloroplast genome.</title>
        <authorList>
            <person name="Reith M.E."/>
            <person name="Munholland J."/>
        </authorList>
    </citation>
    <scope>NUCLEOTIDE SEQUENCE [LARGE SCALE GENOMIC DNA]</scope>
    <source>
        <strain>Avonport</strain>
    </source>
</reference>
<accession>P51287</accession>